<sequence>MKRTFQPSNRKRKNKHGFRERMATANGRRVLAARRAKGRKKLTVSDEYNGVKA</sequence>
<reference key="1">
    <citation type="journal article" date="2004" name="Proc. Natl. Acad. Sci. U.S.A.">
        <title>Genomic analysis of Bacteroides fragilis reveals extensive DNA inversions regulating cell surface adaptation.</title>
        <authorList>
            <person name="Kuwahara T."/>
            <person name="Yamashita A."/>
            <person name="Hirakawa H."/>
            <person name="Nakayama H."/>
            <person name="Toh H."/>
            <person name="Okada N."/>
            <person name="Kuhara S."/>
            <person name="Hattori M."/>
            <person name="Hayashi T."/>
            <person name="Ohnishi Y."/>
        </authorList>
    </citation>
    <scope>NUCLEOTIDE SEQUENCE [LARGE SCALE GENOMIC DNA]</scope>
    <source>
        <strain>YCH46</strain>
    </source>
</reference>
<organism>
    <name type="scientific">Bacteroides fragilis (strain YCH46)</name>
    <dbReference type="NCBI Taxonomy" id="295405"/>
    <lineage>
        <taxon>Bacteria</taxon>
        <taxon>Pseudomonadati</taxon>
        <taxon>Bacteroidota</taxon>
        <taxon>Bacteroidia</taxon>
        <taxon>Bacteroidales</taxon>
        <taxon>Bacteroidaceae</taxon>
        <taxon>Bacteroides</taxon>
    </lineage>
</organism>
<name>RL34_BACFR</name>
<keyword id="KW-0687">Ribonucleoprotein</keyword>
<keyword id="KW-0689">Ribosomal protein</keyword>
<evidence type="ECO:0000255" key="1">
    <source>
        <dbReference type="HAMAP-Rule" id="MF_00391"/>
    </source>
</evidence>
<evidence type="ECO:0000256" key="2">
    <source>
        <dbReference type="SAM" id="MobiDB-lite"/>
    </source>
</evidence>
<evidence type="ECO:0000305" key="3"/>
<feature type="chain" id="PRO_1000013282" description="Large ribosomal subunit protein bL34">
    <location>
        <begin position="1"/>
        <end position="53"/>
    </location>
</feature>
<feature type="region of interest" description="Disordered" evidence="2">
    <location>
        <begin position="1"/>
        <end position="20"/>
    </location>
</feature>
<feature type="region of interest" description="Disordered" evidence="2">
    <location>
        <begin position="32"/>
        <end position="53"/>
    </location>
</feature>
<feature type="compositionally biased region" description="Basic residues" evidence="2">
    <location>
        <begin position="1"/>
        <end position="16"/>
    </location>
</feature>
<feature type="compositionally biased region" description="Basic residues" evidence="2">
    <location>
        <begin position="32"/>
        <end position="42"/>
    </location>
</feature>
<dbReference type="EMBL" id="AP006841">
    <property type="protein sequence ID" value="BAD47236.1"/>
    <property type="molecule type" value="Genomic_DNA"/>
</dbReference>
<dbReference type="RefSeq" id="WP_004292199.1">
    <property type="nucleotide sequence ID" value="NZ_UYXF01000019.1"/>
</dbReference>
<dbReference type="RefSeq" id="YP_097770.1">
    <property type="nucleotide sequence ID" value="NC_006347.1"/>
</dbReference>
<dbReference type="SMR" id="Q64Z40"/>
<dbReference type="STRING" id="295405.BF0487"/>
<dbReference type="GeneID" id="94548252"/>
<dbReference type="KEGG" id="bfr:BF0487"/>
<dbReference type="PATRIC" id="fig|295405.11.peg.503"/>
<dbReference type="HOGENOM" id="CLU_129938_2_0_10"/>
<dbReference type="OrthoDB" id="9804164at2"/>
<dbReference type="Proteomes" id="UP000002197">
    <property type="component" value="Chromosome"/>
</dbReference>
<dbReference type="GO" id="GO:1990904">
    <property type="term" value="C:ribonucleoprotein complex"/>
    <property type="evidence" value="ECO:0007669"/>
    <property type="project" value="UniProtKB-KW"/>
</dbReference>
<dbReference type="GO" id="GO:0005840">
    <property type="term" value="C:ribosome"/>
    <property type="evidence" value="ECO:0007669"/>
    <property type="project" value="UniProtKB-KW"/>
</dbReference>
<dbReference type="GO" id="GO:0003735">
    <property type="term" value="F:structural constituent of ribosome"/>
    <property type="evidence" value="ECO:0007669"/>
    <property type="project" value="InterPro"/>
</dbReference>
<dbReference type="GO" id="GO:0006412">
    <property type="term" value="P:translation"/>
    <property type="evidence" value="ECO:0007669"/>
    <property type="project" value="UniProtKB-UniRule"/>
</dbReference>
<dbReference type="FunFam" id="1.10.287.3980:FF:000001">
    <property type="entry name" value="Mitochondrial ribosomal protein L34"/>
    <property type="match status" value="1"/>
</dbReference>
<dbReference type="Gene3D" id="1.10.287.3980">
    <property type="match status" value="1"/>
</dbReference>
<dbReference type="HAMAP" id="MF_00391">
    <property type="entry name" value="Ribosomal_bL34"/>
    <property type="match status" value="1"/>
</dbReference>
<dbReference type="InterPro" id="IPR000271">
    <property type="entry name" value="Ribosomal_bL34"/>
</dbReference>
<dbReference type="InterPro" id="IPR020939">
    <property type="entry name" value="Ribosomal_bL34_CS"/>
</dbReference>
<dbReference type="NCBIfam" id="TIGR01030">
    <property type="entry name" value="rpmH_bact"/>
    <property type="match status" value="1"/>
</dbReference>
<dbReference type="PANTHER" id="PTHR14503:SF4">
    <property type="entry name" value="LARGE RIBOSOMAL SUBUNIT PROTEIN BL34M"/>
    <property type="match status" value="1"/>
</dbReference>
<dbReference type="PANTHER" id="PTHR14503">
    <property type="entry name" value="MITOCHONDRIAL RIBOSOMAL PROTEIN 34 FAMILY MEMBER"/>
    <property type="match status" value="1"/>
</dbReference>
<dbReference type="Pfam" id="PF00468">
    <property type="entry name" value="Ribosomal_L34"/>
    <property type="match status" value="1"/>
</dbReference>
<dbReference type="PROSITE" id="PS00784">
    <property type="entry name" value="RIBOSOMAL_L34"/>
    <property type="match status" value="1"/>
</dbReference>
<accession>Q64Z40</accession>
<gene>
    <name evidence="1" type="primary">rpmH</name>
    <name type="ordered locus">BF0487</name>
</gene>
<comment type="similarity">
    <text evidence="1">Belongs to the bacterial ribosomal protein bL34 family.</text>
</comment>
<proteinExistence type="inferred from homology"/>
<protein>
    <recommendedName>
        <fullName evidence="1">Large ribosomal subunit protein bL34</fullName>
    </recommendedName>
    <alternativeName>
        <fullName evidence="3">50S ribosomal protein L34</fullName>
    </alternativeName>
</protein>